<gene>
    <name evidence="6" type="primary">TCS1D</name>
</gene>
<reference key="1">
    <citation type="submission" date="2015-06" db="EMBL/GenBank/DDBJ databases">
        <authorList>
            <person name="Hoefler B.C."/>
            <person name="Straight P.D."/>
        </authorList>
    </citation>
    <scope>NUCLEOTIDE SEQUENCE [MRNA]</scope>
</reference>
<reference key="2">
    <citation type="journal article" date="2016" name="Plant Physiol. Biochem.">
        <title>Natural allelic variations of TCS1 play a crucial role in caffeine biosynthesis of tea plant and its related species.</title>
        <authorList>
            <person name="Jin J.-Q."/>
            <person name="Yao M.-Z."/>
            <person name="Ma C.-L."/>
            <person name="Ma J.-Q."/>
            <person name="Chen L."/>
        </authorList>
    </citation>
    <scope>FUNCTION</scope>
    <scope>MUTAGENESIS OF CYS-269</scope>
    <scope>CATALYTIC ACTIVITY</scope>
    <scope>GENE FAMILY</scope>
    <scope>NOMENCLATURE</scope>
</reference>
<dbReference type="EC" id="2.1.1.160" evidence="5"/>
<dbReference type="EMBL" id="KT215399">
    <property type="protein sequence ID" value="ALP01721.1"/>
    <property type="molecule type" value="mRNA"/>
</dbReference>
<dbReference type="SMR" id="A0A0S2PMA8"/>
<dbReference type="GO" id="GO:0102741">
    <property type="term" value="F:caffeine synthase activity"/>
    <property type="evidence" value="ECO:0007669"/>
    <property type="project" value="UniProtKB-EC"/>
</dbReference>
<dbReference type="GO" id="GO:0046872">
    <property type="term" value="F:metal ion binding"/>
    <property type="evidence" value="ECO:0007669"/>
    <property type="project" value="UniProtKB-KW"/>
</dbReference>
<dbReference type="GO" id="GO:0032259">
    <property type="term" value="P:methylation"/>
    <property type="evidence" value="ECO:0007669"/>
    <property type="project" value="UniProtKB-KW"/>
</dbReference>
<dbReference type="Gene3D" id="1.10.1200.270">
    <property type="entry name" value="Methyltransferase, alpha-helical capping domain"/>
    <property type="match status" value="1"/>
</dbReference>
<dbReference type="Gene3D" id="3.40.50.150">
    <property type="entry name" value="Vaccinia Virus protein VP39"/>
    <property type="match status" value="1"/>
</dbReference>
<dbReference type="InterPro" id="IPR005299">
    <property type="entry name" value="MeTrfase_7"/>
</dbReference>
<dbReference type="InterPro" id="IPR042086">
    <property type="entry name" value="MeTrfase_capping"/>
</dbReference>
<dbReference type="InterPro" id="IPR029063">
    <property type="entry name" value="SAM-dependent_MTases_sf"/>
</dbReference>
<dbReference type="PANTHER" id="PTHR31009">
    <property type="entry name" value="S-ADENOSYL-L-METHIONINE:CARBOXYL METHYLTRANSFERASE FAMILY PROTEIN"/>
    <property type="match status" value="1"/>
</dbReference>
<dbReference type="Pfam" id="PF03492">
    <property type="entry name" value="Methyltransf_7"/>
    <property type="match status" value="1"/>
</dbReference>
<dbReference type="SUPFAM" id="SSF53335">
    <property type="entry name" value="S-adenosyl-L-methionine-dependent methyltransferases"/>
    <property type="match status" value="1"/>
</dbReference>
<comment type="function">
    <text evidence="5">Involved in the biosynthesis of caffeine (PubMed:26773541). Catalyzes the conversion of 7-methylxanthine (7mX) to theobromine and of theobromine to caffeine (PubMed:26773541).</text>
</comment>
<comment type="catalytic activity">
    <reaction evidence="5">
        <text>theobromine + S-adenosyl-L-methionine = caffeine + S-adenosyl-L-homocysteine + H(+)</text>
        <dbReference type="Rhea" id="RHEA:20944"/>
        <dbReference type="ChEBI" id="CHEBI:15378"/>
        <dbReference type="ChEBI" id="CHEBI:27732"/>
        <dbReference type="ChEBI" id="CHEBI:28946"/>
        <dbReference type="ChEBI" id="CHEBI:57856"/>
        <dbReference type="ChEBI" id="CHEBI:59789"/>
        <dbReference type="EC" id="2.1.1.160"/>
    </reaction>
    <physiologicalReaction direction="left-to-right" evidence="5">
        <dbReference type="Rhea" id="RHEA:20945"/>
    </physiologicalReaction>
</comment>
<comment type="catalytic activity">
    <reaction evidence="5">
        <text>7-methylxanthine + S-adenosyl-L-methionine = theobromine + S-adenosyl-L-homocysteine + H(+)</text>
        <dbReference type="Rhea" id="RHEA:24604"/>
        <dbReference type="ChEBI" id="CHEBI:15378"/>
        <dbReference type="ChEBI" id="CHEBI:28946"/>
        <dbReference type="ChEBI" id="CHEBI:48991"/>
        <dbReference type="ChEBI" id="CHEBI:57856"/>
        <dbReference type="ChEBI" id="CHEBI:59789"/>
        <dbReference type="EC" id="2.1.1.160"/>
    </reaction>
    <physiologicalReaction direction="left-to-right" evidence="5">
        <dbReference type="Rhea" id="RHEA:24605"/>
    </physiologicalReaction>
</comment>
<comment type="cofactor">
    <cofactor evidence="3">
        <name>Mg(2+)</name>
        <dbReference type="ChEBI" id="CHEBI:18420"/>
    </cofactor>
    <text evidence="3">Binds 1 Mg(2+) ion per subunit.</text>
</comment>
<comment type="pathway">
    <text evidence="4">Alkaloid biosynthesis.</text>
</comment>
<comment type="similarity">
    <text evidence="7">Belongs to the methyltransferase superfamily. Type-7 methyltransferase family.</text>
</comment>
<accession>A0A0S2PMA8</accession>
<protein>
    <recommendedName>
        <fullName evidence="6">Caffeine synthase 1</fullName>
        <shortName evidence="6">TCS1d</shortName>
        <ecNumber evidence="5">2.1.1.160</ecNumber>
    </recommendedName>
</protein>
<keyword id="KW-0460">Magnesium</keyword>
<keyword id="KW-0479">Metal-binding</keyword>
<keyword id="KW-0489">Methyltransferase</keyword>
<keyword id="KW-0808">Transferase</keyword>
<evidence type="ECO:0000250" key="1">
    <source>
        <dbReference type="UniProtKB" id="A0A6C0WW36"/>
    </source>
</evidence>
<evidence type="ECO:0000250" key="2">
    <source>
        <dbReference type="UniProtKB" id="Q2HXI6"/>
    </source>
</evidence>
<evidence type="ECO:0000250" key="3">
    <source>
        <dbReference type="UniProtKB" id="Q9FLN8"/>
    </source>
</evidence>
<evidence type="ECO:0000250" key="4">
    <source>
        <dbReference type="UniProtKB" id="Q9FZN8"/>
    </source>
</evidence>
<evidence type="ECO:0000269" key="5">
    <source>
    </source>
</evidence>
<evidence type="ECO:0000303" key="6">
    <source>
    </source>
</evidence>
<evidence type="ECO:0000305" key="7"/>
<name>TCS1D_CAMTA</name>
<organism>
    <name type="scientific">Camellia taliensis</name>
    <name type="common">Wild tea</name>
    <dbReference type="NCBI Taxonomy" id="182317"/>
    <lineage>
        <taxon>Eukaryota</taxon>
        <taxon>Viridiplantae</taxon>
        <taxon>Streptophyta</taxon>
        <taxon>Embryophyta</taxon>
        <taxon>Tracheophyta</taxon>
        <taxon>Spermatophyta</taxon>
        <taxon>Magnoliopsida</taxon>
        <taxon>eudicotyledons</taxon>
        <taxon>Gunneridae</taxon>
        <taxon>Pentapetalae</taxon>
        <taxon>asterids</taxon>
        <taxon>Ericales</taxon>
        <taxon>Theaceae</taxon>
        <taxon>Camellia</taxon>
    </lineage>
</organism>
<feature type="chain" id="PRO_0000451799" description="Caffeine synthase 1">
    <location>
        <begin position="1"/>
        <end position="369"/>
    </location>
</feature>
<feature type="binding site" evidence="1">
    <location>
        <position position="24"/>
    </location>
    <ligand>
        <name>S-adenosyl-L-homocysteine</name>
        <dbReference type="ChEBI" id="CHEBI:57856"/>
    </ligand>
</feature>
<feature type="binding site" evidence="1">
    <location>
        <position position="31"/>
    </location>
    <ligand>
        <name>caffeine</name>
        <dbReference type="ChEBI" id="CHEBI:27732"/>
    </ligand>
</feature>
<feature type="binding site" evidence="1">
    <location>
        <position position="66"/>
    </location>
    <ligand>
        <name>S-adenosyl-L-homocysteine</name>
        <dbReference type="ChEBI" id="CHEBI:57856"/>
    </ligand>
</feature>
<feature type="binding site" evidence="1">
    <location>
        <position position="71"/>
    </location>
    <ligand>
        <name>S-adenosyl-L-homocysteine</name>
        <dbReference type="ChEBI" id="CHEBI:57856"/>
    </ligand>
</feature>
<feature type="binding site" evidence="1">
    <location>
        <position position="103"/>
    </location>
    <ligand>
        <name>S-adenosyl-L-homocysteine</name>
        <dbReference type="ChEBI" id="CHEBI:57856"/>
    </ligand>
</feature>
<feature type="binding site" evidence="1">
    <location>
        <position position="104"/>
    </location>
    <ligand>
        <name>S-adenosyl-L-homocysteine</name>
        <dbReference type="ChEBI" id="CHEBI:57856"/>
    </ligand>
</feature>
<feature type="binding site" evidence="1">
    <location>
        <position position="138"/>
    </location>
    <ligand>
        <name>S-adenosyl-L-homocysteine</name>
        <dbReference type="ChEBI" id="CHEBI:57856"/>
    </ligand>
</feature>
<feature type="binding site" evidence="1">
    <location>
        <position position="139"/>
    </location>
    <ligand>
        <name>S-adenosyl-L-homocysteine</name>
        <dbReference type="ChEBI" id="CHEBI:57856"/>
    </ligand>
</feature>
<feature type="binding site" evidence="1">
    <location>
        <position position="156"/>
    </location>
    <ligand>
        <name>caffeine</name>
        <dbReference type="ChEBI" id="CHEBI:27732"/>
    </ligand>
</feature>
<feature type="binding site" evidence="1">
    <location>
        <position position="159"/>
    </location>
    <ligand>
        <name>caffeine</name>
        <dbReference type="ChEBI" id="CHEBI:27732"/>
    </ligand>
</feature>
<feature type="binding site" evidence="1">
    <location>
        <position position="160"/>
    </location>
    <ligand>
        <name>caffeine</name>
        <dbReference type="ChEBI" id="CHEBI:27732"/>
    </ligand>
</feature>
<feature type="binding site" evidence="3">
    <location>
        <position position="177"/>
    </location>
    <ligand>
        <name>Mg(2+)</name>
        <dbReference type="ChEBI" id="CHEBI:18420"/>
    </ligand>
</feature>
<feature type="binding site" evidence="1">
    <location>
        <position position="225"/>
    </location>
    <ligand>
        <name>caffeine</name>
        <dbReference type="ChEBI" id="CHEBI:27732"/>
    </ligand>
</feature>
<feature type="binding site" evidence="3">
    <location>
        <position position="263"/>
    </location>
    <ligand>
        <name>Mg(2+)</name>
        <dbReference type="ChEBI" id="CHEBI:18420"/>
    </ligand>
</feature>
<feature type="binding site" evidence="3">
    <location>
        <position position="265"/>
    </location>
    <ligand>
        <name>Mg(2+)</name>
        <dbReference type="ChEBI" id="CHEBI:18420"/>
    </ligand>
</feature>
<feature type="binding site" evidence="3">
    <location>
        <position position="266"/>
    </location>
    <ligand>
        <name>Mg(2+)</name>
        <dbReference type="ChEBI" id="CHEBI:18420"/>
    </ligand>
</feature>
<feature type="binding site" evidence="1">
    <location>
        <position position="321"/>
    </location>
    <ligand>
        <name>caffeine</name>
        <dbReference type="ChEBI" id="CHEBI:27732"/>
    </ligand>
</feature>
<feature type="site" description="Involved in substrate discrimination" evidence="4">
    <location>
        <position position="153"/>
    </location>
</feature>
<feature type="site" description="Involved in substrate discrimination" evidence="2">
    <location>
        <position position="225"/>
    </location>
</feature>
<feature type="site" description="Involved in substrate discrimination" evidence="5">
    <location>
        <position position="269"/>
    </location>
</feature>
<feature type="site" description="Involved in substrate discrimination" evidence="4">
    <location>
        <position position="317"/>
    </location>
</feature>
<feature type="site" description="Involved in substrate discrimination" evidence="4">
    <location>
        <position position="332"/>
    </location>
</feature>
<feature type="mutagenesis site" description="Strongly reduced caffeine synthase and theobromine synthase activities." evidence="5">
    <original>C</original>
    <variation>S</variation>
    <location>
        <position position="269"/>
    </location>
</feature>
<sequence length="369" mass="41401">MELATTGKVNEVLFMNRGEGESSYAQNSSFTQQVASMATPALENAVETLFSKDFHLQALNAVDLGCAAGPNTFAVISTIKRMMEKKCRELNCQTLELQVYLNDLFGNDFNTLFKGLSSEVIGNKCEEVPCYVMGVPGSFHGRLFPRNSLHLVHSSYSVHWLTQAPKGLTNREGLALNKGKIYISKTSPPIVREAYLTQFHEDFTMFLNARSQEVVPNGCMVLILRSRQSSDPSDMQSCFTWELLAKAIAELVSQGLIDEDKLDAFNIPCYFPSLEEVKDIVERDGSFTIDHMEGFGLDSLQMEENDKWVRGEKFTKVVRAFTEPIISNQFGHEIMDKLYDKFTHIVVSDFEAKLPKTTSIILVLSKIDG</sequence>
<proteinExistence type="evidence at protein level"/>